<organism>
    <name type="scientific">Burkholderia pseudomallei (strain 668)</name>
    <dbReference type="NCBI Taxonomy" id="320373"/>
    <lineage>
        <taxon>Bacteria</taxon>
        <taxon>Pseudomonadati</taxon>
        <taxon>Pseudomonadota</taxon>
        <taxon>Betaproteobacteria</taxon>
        <taxon>Burkholderiales</taxon>
        <taxon>Burkholderiaceae</taxon>
        <taxon>Burkholderia</taxon>
        <taxon>pseudomallei group</taxon>
    </lineage>
</organism>
<keyword id="KW-0456">Lyase</keyword>
<proteinExistence type="inferred from homology"/>
<comment type="function">
    <text evidence="1">Catalyzes the reaction of cyanate with bicarbonate to produce ammonia and carbon dioxide.</text>
</comment>
<comment type="catalytic activity">
    <reaction evidence="1">
        <text>cyanate + hydrogencarbonate + 3 H(+) = NH4(+) + 2 CO2</text>
        <dbReference type="Rhea" id="RHEA:11120"/>
        <dbReference type="ChEBI" id="CHEBI:15378"/>
        <dbReference type="ChEBI" id="CHEBI:16526"/>
        <dbReference type="ChEBI" id="CHEBI:17544"/>
        <dbReference type="ChEBI" id="CHEBI:28938"/>
        <dbReference type="ChEBI" id="CHEBI:29195"/>
        <dbReference type="EC" id="4.2.1.104"/>
    </reaction>
</comment>
<comment type="similarity">
    <text evidence="1">Belongs to the cyanase family.</text>
</comment>
<gene>
    <name evidence="1" type="primary">cynS</name>
    <name type="ordered locus">BURPS668_3427</name>
</gene>
<sequence length="156" mass="16958">MTQSQHSQSPREALAERIVEAKTRKNLTFEQINEGTGLSVAFTTAALLGQHPLPADAARVVAAKLDLDDDAQRLLQTIPVRGSIPGGVPTDPTIYRFYEIVQVYGSTLKALIHEQFGDGIVSAINFKLDIKKVDDPEGGSRAVITLDGKYLPTKPF</sequence>
<dbReference type="EC" id="4.2.1.104" evidence="1"/>
<dbReference type="EMBL" id="CP000570">
    <property type="protein sequence ID" value="ABN81402.1"/>
    <property type="molecule type" value="Genomic_DNA"/>
</dbReference>
<dbReference type="RefSeq" id="WP_004194284.1">
    <property type="nucleotide sequence ID" value="NC_009074.1"/>
</dbReference>
<dbReference type="SMR" id="A3NDL7"/>
<dbReference type="GeneID" id="93061548"/>
<dbReference type="KEGG" id="bpd:BURPS668_3427"/>
<dbReference type="HOGENOM" id="CLU_103452_1_1_4"/>
<dbReference type="GO" id="GO:0008824">
    <property type="term" value="F:cyanate hydratase activity"/>
    <property type="evidence" value="ECO:0007669"/>
    <property type="project" value="UniProtKB-UniRule"/>
</dbReference>
<dbReference type="GO" id="GO:0003677">
    <property type="term" value="F:DNA binding"/>
    <property type="evidence" value="ECO:0007669"/>
    <property type="project" value="InterPro"/>
</dbReference>
<dbReference type="GO" id="GO:0009439">
    <property type="term" value="P:cyanate metabolic process"/>
    <property type="evidence" value="ECO:0007669"/>
    <property type="project" value="UniProtKB-UniRule"/>
</dbReference>
<dbReference type="CDD" id="cd00559">
    <property type="entry name" value="Cyanase_C"/>
    <property type="match status" value="1"/>
</dbReference>
<dbReference type="Gene3D" id="3.30.1160.10">
    <property type="entry name" value="Cyanate lyase, C-terminal domain"/>
    <property type="match status" value="1"/>
</dbReference>
<dbReference type="Gene3D" id="1.10.260.40">
    <property type="entry name" value="lambda repressor-like DNA-binding domains"/>
    <property type="match status" value="1"/>
</dbReference>
<dbReference type="HAMAP" id="MF_00535">
    <property type="entry name" value="Cyanate_hydrat"/>
    <property type="match status" value="1"/>
</dbReference>
<dbReference type="InterPro" id="IPR008076">
    <property type="entry name" value="Cyanase"/>
</dbReference>
<dbReference type="InterPro" id="IPR003712">
    <property type="entry name" value="Cyanate_lyase_C"/>
</dbReference>
<dbReference type="InterPro" id="IPR036581">
    <property type="entry name" value="Cyanate_lyase_C_sf"/>
</dbReference>
<dbReference type="InterPro" id="IPR048564">
    <property type="entry name" value="CYNS_N"/>
</dbReference>
<dbReference type="InterPro" id="IPR010982">
    <property type="entry name" value="Lambda_DNA-bd_dom_sf"/>
</dbReference>
<dbReference type="NCBIfam" id="TIGR00673">
    <property type="entry name" value="cynS"/>
    <property type="match status" value="1"/>
</dbReference>
<dbReference type="NCBIfam" id="NF002773">
    <property type="entry name" value="PRK02866.1"/>
    <property type="match status" value="1"/>
</dbReference>
<dbReference type="PANTHER" id="PTHR34186">
    <property type="entry name" value="CYANATE HYDRATASE"/>
    <property type="match status" value="1"/>
</dbReference>
<dbReference type="PANTHER" id="PTHR34186:SF2">
    <property type="entry name" value="CYANATE HYDRATASE"/>
    <property type="match status" value="1"/>
</dbReference>
<dbReference type="Pfam" id="PF02560">
    <property type="entry name" value="Cyanate_lyase"/>
    <property type="match status" value="1"/>
</dbReference>
<dbReference type="Pfam" id="PF21291">
    <property type="entry name" value="CYNS_N"/>
    <property type="match status" value="1"/>
</dbReference>
<dbReference type="PIRSF" id="PIRSF001263">
    <property type="entry name" value="Cyanate_hydratas"/>
    <property type="match status" value="1"/>
</dbReference>
<dbReference type="PRINTS" id="PR01693">
    <property type="entry name" value="CYANASE"/>
</dbReference>
<dbReference type="SMART" id="SM01116">
    <property type="entry name" value="Cyanate_lyase"/>
    <property type="match status" value="1"/>
</dbReference>
<dbReference type="SUPFAM" id="SSF55234">
    <property type="entry name" value="Cyanase C-terminal domain"/>
    <property type="match status" value="1"/>
</dbReference>
<dbReference type="SUPFAM" id="SSF47413">
    <property type="entry name" value="lambda repressor-like DNA-binding domains"/>
    <property type="match status" value="1"/>
</dbReference>
<evidence type="ECO:0000255" key="1">
    <source>
        <dbReference type="HAMAP-Rule" id="MF_00535"/>
    </source>
</evidence>
<accession>A3NDL7</accession>
<protein>
    <recommendedName>
        <fullName evidence="1">Cyanate hydratase</fullName>
        <shortName evidence="1">Cyanase</shortName>
        <ecNumber evidence="1">4.2.1.104</ecNumber>
    </recommendedName>
    <alternativeName>
        <fullName evidence="1">Cyanate hydrolase</fullName>
    </alternativeName>
    <alternativeName>
        <fullName evidence="1">Cyanate lyase</fullName>
    </alternativeName>
</protein>
<name>CYNS_BURP6</name>
<reference key="1">
    <citation type="journal article" date="2010" name="Genome Biol. Evol.">
        <title>Continuing evolution of Burkholderia mallei through genome reduction and large-scale rearrangements.</title>
        <authorList>
            <person name="Losada L."/>
            <person name="Ronning C.M."/>
            <person name="DeShazer D."/>
            <person name="Woods D."/>
            <person name="Fedorova N."/>
            <person name="Kim H.S."/>
            <person name="Shabalina S.A."/>
            <person name="Pearson T.R."/>
            <person name="Brinkac L."/>
            <person name="Tan P."/>
            <person name="Nandi T."/>
            <person name="Crabtree J."/>
            <person name="Badger J."/>
            <person name="Beckstrom-Sternberg S."/>
            <person name="Saqib M."/>
            <person name="Schutzer S.E."/>
            <person name="Keim P."/>
            <person name="Nierman W.C."/>
        </authorList>
    </citation>
    <scope>NUCLEOTIDE SEQUENCE [LARGE SCALE GENOMIC DNA]</scope>
    <source>
        <strain>668</strain>
    </source>
</reference>
<feature type="chain" id="PRO_1000051472" description="Cyanate hydratase">
    <location>
        <begin position="1"/>
        <end position="156"/>
    </location>
</feature>
<feature type="active site" evidence="1">
    <location>
        <position position="96"/>
    </location>
</feature>
<feature type="active site" evidence="1">
    <location>
        <position position="99"/>
    </location>
</feature>
<feature type="active site" evidence="1">
    <location>
        <position position="122"/>
    </location>
</feature>